<dbReference type="EC" id="1.11.1.7"/>
<dbReference type="EMBL" id="AB010699">
    <property type="protein sequence ID" value="BAB10896.1"/>
    <property type="molecule type" value="Genomic_DNA"/>
</dbReference>
<dbReference type="EMBL" id="CP002688">
    <property type="protein sequence ID" value="AED94513.1"/>
    <property type="molecule type" value="Genomic_DNA"/>
</dbReference>
<dbReference type="EMBL" id="AK118632">
    <property type="protein sequence ID" value="BAC43229.1"/>
    <property type="molecule type" value="mRNA"/>
</dbReference>
<dbReference type="EMBL" id="Y11791">
    <property type="protein sequence ID" value="CAA72487.1"/>
    <property type="molecule type" value="mRNA"/>
</dbReference>
<dbReference type="RefSeq" id="NP_198831.1">
    <property type="nucleotide sequence ID" value="NM_123378.3"/>
</dbReference>
<dbReference type="SMR" id="Q9FL16"/>
<dbReference type="FunCoup" id="Q9FL16">
    <property type="interactions" value="223"/>
</dbReference>
<dbReference type="STRING" id="3702.Q9FL16"/>
<dbReference type="PeroxiBase" id="229">
    <property type="entry name" value="AtPrx63"/>
</dbReference>
<dbReference type="GlyCosmos" id="Q9FL16">
    <property type="glycosylation" value="2 sites, No reported glycans"/>
</dbReference>
<dbReference type="GlyGen" id="Q9FL16">
    <property type="glycosylation" value="2 sites"/>
</dbReference>
<dbReference type="iPTMnet" id="Q9FL16"/>
<dbReference type="PaxDb" id="3702-AT5G40150.1"/>
<dbReference type="ProteomicsDB" id="236391"/>
<dbReference type="EnsemblPlants" id="AT5G40150.1">
    <property type="protein sequence ID" value="AT5G40150.1"/>
    <property type="gene ID" value="AT5G40150"/>
</dbReference>
<dbReference type="GeneID" id="834012"/>
<dbReference type="Gramene" id="AT5G40150.1">
    <property type="protein sequence ID" value="AT5G40150.1"/>
    <property type="gene ID" value="AT5G40150"/>
</dbReference>
<dbReference type="KEGG" id="ath:AT5G40150"/>
<dbReference type="Araport" id="AT5G40150"/>
<dbReference type="TAIR" id="AT5G40150"/>
<dbReference type="eggNOG" id="ENOG502QR74">
    <property type="taxonomic scope" value="Eukaryota"/>
</dbReference>
<dbReference type="HOGENOM" id="CLU_010543_0_3_1"/>
<dbReference type="InParanoid" id="Q9FL16"/>
<dbReference type="OMA" id="YARDQSR"/>
<dbReference type="OrthoDB" id="2113341at2759"/>
<dbReference type="PhylomeDB" id="Q9FL16"/>
<dbReference type="BioCyc" id="ARA:AT5G40150-MONOMER"/>
<dbReference type="PRO" id="PR:Q9FL16"/>
<dbReference type="Proteomes" id="UP000006548">
    <property type="component" value="Chromosome 5"/>
</dbReference>
<dbReference type="ExpressionAtlas" id="Q9FL16">
    <property type="expression patterns" value="baseline and differential"/>
</dbReference>
<dbReference type="GO" id="GO:0005576">
    <property type="term" value="C:extracellular region"/>
    <property type="evidence" value="ECO:0007669"/>
    <property type="project" value="UniProtKB-SubCell"/>
</dbReference>
<dbReference type="GO" id="GO:0020037">
    <property type="term" value="F:heme binding"/>
    <property type="evidence" value="ECO:0007669"/>
    <property type="project" value="InterPro"/>
</dbReference>
<dbReference type="GO" id="GO:0140825">
    <property type="term" value="F:lactoperoxidase activity"/>
    <property type="evidence" value="ECO:0007669"/>
    <property type="project" value="UniProtKB-EC"/>
</dbReference>
<dbReference type="GO" id="GO:0046872">
    <property type="term" value="F:metal ion binding"/>
    <property type="evidence" value="ECO:0007669"/>
    <property type="project" value="UniProtKB-KW"/>
</dbReference>
<dbReference type="GO" id="GO:0042744">
    <property type="term" value="P:hydrogen peroxide catabolic process"/>
    <property type="evidence" value="ECO:0007669"/>
    <property type="project" value="UniProtKB-KW"/>
</dbReference>
<dbReference type="GO" id="GO:0006979">
    <property type="term" value="P:response to oxidative stress"/>
    <property type="evidence" value="ECO:0007669"/>
    <property type="project" value="InterPro"/>
</dbReference>
<dbReference type="CDD" id="cd00693">
    <property type="entry name" value="secretory_peroxidase"/>
    <property type="match status" value="1"/>
</dbReference>
<dbReference type="FunFam" id="1.10.420.10:FF:000006">
    <property type="entry name" value="Peroxidase"/>
    <property type="match status" value="1"/>
</dbReference>
<dbReference type="FunFam" id="1.10.520.10:FF:000008">
    <property type="entry name" value="Peroxidase"/>
    <property type="match status" value="1"/>
</dbReference>
<dbReference type="Gene3D" id="1.10.520.10">
    <property type="match status" value="1"/>
</dbReference>
<dbReference type="Gene3D" id="1.10.420.10">
    <property type="entry name" value="Peroxidase, domain 2"/>
    <property type="match status" value="1"/>
</dbReference>
<dbReference type="InterPro" id="IPR002016">
    <property type="entry name" value="Haem_peroxidase"/>
</dbReference>
<dbReference type="InterPro" id="IPR010255">
    <property type="entry name" value="Haem_peroxidase_sf"/>
</dbReference>
<dbReference type="InterPro" id="IPR000823">
    <property type="entry name" value="Peroxidase_pln"/>
</dbReference>
<dbReference type="InterPro" id="IPR019794">
    <property type="entry name" value="Peroxidases_AS"/>
</dbReference>
<dbReference type="InterPro" id="IPR019793">
    <property type="entry name" value="Peroxidases_heam-ligand_BS"/>
</dbReference>
<dbReference type="InterPro" id="IPR033905">
    <property type="entry name" value="Secretory_peroxidase"/>
</dbReference>
<dbReference type="PANTHER" id="PTHR31517">
    <property type="match status" value="1"/>
</dbReference>
<dbReference type="PANTHER" id="PTHR31517:SF49">
    <property type="entry name" value="PEROXIDASE 63"/>
    <property type="match status" value="1"/>
</dbReference>
<dbReference type="Pfam" id="PF00141">
    <property type="entry name" value="peroxidase"/>
    <property type="match status" value="1"/>
</dbReference>
<dbReference type="PRINTS" id="PR00458">
    <property type="entry name" value="PEROXIDASE"/>
</dbReference>
<dbReference type="PRINTS" id="PR00461">
    <property type="entry name" value="PLPEROXIDASE"/>
</dbReference>
<dbReference type="SUPFAM" id="SSF48113">
    <property type="entry name" value="Heme-dependent peroxidases"/>
    <property type="match status" value="1"/>
</dbReference>
<dbReference type="PROSITE" id="PS00435">
    <property type="entry name" value="PEROXIDASE_1"/>
    <property type="match status" value="1"/>
</dbReference>
<dbReference type="PROSITE" id="PS00436">
    <property type="entry name" value="PEROXIDASE_2"/>
    <property type="match status" value="1"/>
</dbReference>
<dbReference type="PROSITE" id="PS50873">
    <property type="entry name" value="PEROXIDASE_4"/>
    <property type="match status" value="1"/>
</dbReference>
<name>PER63_ARATH</name>
<feature type="signal peptide" evidence="1">
    <location>
        <begin position="1"/>
        <end position="27"/>
    </location>
</feature>
<feature type="chain" id="PRO_0000023728" description="Peroxidase 63">
    <location>
        <begin position="28"/>
        <end position="328"/>
    </location>
</feature>
<feature type="active site" description="Proton acceptor" evidence="2 3">
    <location>
        <position position="72"/>
    </location>
</feature>
<feature type="binding site" evidence="2">
    <location>
        <position position="73"/>
    </location>
    <ligand>
        <name>Ca(2+)</name>
        <dbReference type="ChEBI" id="CHEBI:29108"/>
        <label>1</label>
    </ligand>
</feature>
<feature type="binding site" evidence="2">
    <location>
        <position position="78"/>
    </location>
    <ligand>
        <name>Ca(2+)</name>
        <dbReference type="ChEBI" id="CHEBI:29108"/>
        <label>1</label>
    </ligand>
</feature>
<feature type="binding site" evidence="2">
    <location>
        <position position="80"/>
    </location>
    <ligand>
        <name>Ca(2+)</name>
        <dbReference type="ChEBI" id="CHEBI:29108"/>
        <label>1</label>
    </ligand>
</feature>
<feature type="binding site" evidence="2">
    <location>
        <position position="82"/>
    </location>
    <ligand>
        <name>Ca(2+)</name>
        <dbReference type="ChEBI" id="CHEBI:29108"/>
        <label>1</label>
    </ligand>
</feature>
<feature type="binding site" evidence="2">
    <location>
        <position position="170"/>
    </location>
    <ligand>
        <name>substrate</name>
    </ligand>
</feature>
<feature type="binding site" description="axial binding residue" evidence="2">
    <location>
        <position position="200"/>
    </location>
    <ligand>
        <name>heme b</name>
        <dbReference type="ChEBI" id="CHEBI:60344"/>
    </ligand>
    <ligandPart>
        <name>Fe</name>
        <dbReference type="ChEBI" id="CHEBI:18248"/>
    </ligandPart>
</feature>
<feature type="binding site" evidence="2">
    <location>
        <position position="201"/>
    </location>
    <ligand>
        <name>Ca(2+)</name>
        <dbReference type="ChEBI" id="CHEBI:29108"/>
        <label>2</label>
    </ligand>
</feature>
<feature type="binding site" evidence="2">
    <location>
        <position position="248"/>
    </location>
    <ligand>
        <name>Ca(2+)</name>
        <dbReference type="ChEBI" id="CHEBI:29108"/>
        <label>2</label>
    </ligand>
</feature>
<feature type="binding site" evidence="2">
    <location>
        <position position="251"/>
    </location>
    <ligand>
        <name>Ca(2+)</name>
        <dbReference type="ChEBI" id="CHEBI:29108"/>
        <label>2</label>
    </ligand>
</feature>
<feature type="binding site" evidence="2">
    <location>
        <position position="256"/>
    </location>
    <ligand>
        <name>Ca(2+)</name>
        <dbReference type="ChEBI" id="CHEBI:29108"/>
        <label>2</label>
    </ligand>
</feature>
<feature type="site" description="Transition state stabilizer" evidence="2">
    <location>
        <position position="68"/>
    </location>
</feature>
<feature type="glycosylation site" description="N-linked (GlcNAc...) asparagine" evidence="1">
    <location>
        <position position="217"/>
    </location>
</feature>
<feature type="glycosylation site" description="N-linked (GlcNAc...) asparagine" evidence="1">
    <location>
        <position position="218"/>
    </location>
</feature>
<feature type="disulfide bond" evidence="2">
    <location>
        <begin position="41"/>
        <end position="122"/>
    </location>
</feature>
<feature type="disulfide bond" evidence="2">
    <location>
        <begin position="74"/>
        <end position="79"/>
    </location>
</feature>
<feature type="disulfide bond" evidence="2">
    <location>
        <begin position="128"/>
        <end position="324"/>
    </location>
</feature>
<feature type="disulfide bond" evidence="2">
    <location>
        <begin position="207"/>
        <end position="234"/>
    </location>
</feature>
<sequence length="328" mass="36120">MAEQSQLKNLTIILLLLCLSFQSLSFAAESHLTVDFYSKSCPKFLDIIRETITNKQISTPTTAAAALRLFFHDCFPNGCDASVLVSSTAFNTAERDSSINLSLPGDGFDVVIRAKTALELACPNTVSCSDIIAVAVRDLLVTVGGPYYEISLGRRDSRTSKSSLVSDLLPLPSMQISKLIDQFSSRGFSVQEMVALSGAHTIGFSHCKEFTNRVNPNNSTGYNPRFAVALKKACSNSKNDPTISVFNDVMTPNKFDNMYFQNIPKGLGLLESDHGLFSDPRTRPFVELYARDQSRFFNDFAGAMQKLSLHGVLTGRRGEIRRRCDAIN</sequence>
<evidence type="ECO:0000255" key="1"/>
<evidence type="ECO:0000255" key="2">
    <source>
        <dbReference type="PROSITE-ProRule" id="PRU00297"/>
    </source>
</evidence>
<evidence type="ECO:0000255" key="3">
    <source>
        <dbReference type="PROSITE-ProRule" id="PRU10012"/>
    </source>
</evidence>
<accession>Q9FL16</accession>
<accession>P93726</accession>
<organism>
    <name type="scientific">Arabidopsis thaliana</name>
    <name type="common">Mouse-ear cress</name>
    <dbReference type="NCBI Taxonomy" id="3702"/>
    <lineage>
        <taxon>Eukaryota</taxon>
        <taxon>Viridiplantae</taxon>
        <taxon>Streptophyta</taxon>
        <taxon>Embryophyta</taxon>
        <taxon>Tracheophyta</taxon>
        <taxon>Spermatophyta</taxon>
        <taxon>Magnoliopsida</taxon>
        <taxon>eudicotyledons</taxon>
        <taxon>Gunneridae</taxon>
        <taxon>Pentapetalae</taxon>
        <taxon>rosids</taxon>
        <taxon>malvids</taxon>
        <taxon>Brassicales</taxon>
        <taxon>Brassicaceae</taxon>
        <taxon>Camelineae</taxon>
        <taxon>Arabidopsis</taxon>
    </lineage>
</organism>
<reference key="1">
    <citation type="journal article" date="1998" name="DNA Res.">
        <title>Structural analysis of Arabidopsis thaliana chromosome 5. V. Sequence features of the regions of 1,381,565 bp covered by twenty one physically assigned P1 and TAC clones.</title>
        <authorList>
            <person name="Kaneko T."/>
            <person name="Kotani H."/>
            <person name="Nakamura Y."/>
            <person name="Sato S."/>
            <person name="Asamizu E."/>
            <person name="Miyajima N."/>
            <person name="Tabata S."/>
        </authorList>
    </citation>
    <scope>NUCLEOTIDE SEQUENCE [LARGE SCALE GENOMIC DNA]</scope>
    <source>
        <strain>cv. Columbia</strain>
    </source>
</reference>
<reference key="2">
    <citation type="journal article" date="2017" name="Plant J.">
        <title>Araport11: a complete reannotation of the Arabidopsis thaliana reference genome.</title>
        <authorList>
            <person name="Cheng C.Y."/>
            <person name="Krishnakumar V."/>
            <person name="Chan A.P."/>
            <person name="Thibaud-Nissen F."/>
            <person name="Schobel S."/>
            <person name="Town C.D."/>
        </authorList>
    </citation>
    <scope>GENOME REANNOTATION</scope>
    <source>
        <strain>cv. Columbia</strain>
    </source>
</reference>
<reference key="3">
    <citation type="journal article" date="2002" name="Science">
        <title>Functional annotation of a full-length Arabidopsis cDNA collection.</title>
        <authorList>
            <person name="Seki M."/>
            <person name="Narusaka M."/>
            <person name="Kamiya A."/>
            <person name="Ishida J."/>
            <person name="Satou M."/>
            <person name="Sakurai T."/>
            <person name="Nakajima M."/>
            <person name="Enju A."/>
            <person name="Akiyama K."/>
            <person name="Oono Y."/>
            <person name="Muramatsu M."/>
            <person name="Hayashizaki Y."/>
            <person name="Kawai J."/>
            <person name="Carninci P."/>
            <person name="Itoh M."/>
            <person name="Ishii Y."/>
            <person name="Arakawa T."/>
            <person name="Shibata K."/>
            <person name="Shinagawa A."/>
            <person name="Shinozaki K."/>
        </authorList>
    </citation>
    <scope>NUCLEOTIDE SEQUENCE [LARGE SCALE MRNA]</scope>
    <source>
        <strain>cv. Columbia</strain>
    </source>
</reference>
<reference key="4">
    <citation type="submission" date="1997-03" db="EMBL/GenBank/DDBJ databases">
        <title>From expressed sequence tags to structure, function, evolution and expression of 28 ER-targeted Arabidopsis peroxidases.</title>
        <authorList>
            <person name="Welinder K.G."/>
            <person name="Jespersen H.M."/>
            <person name="Kjaersgaard I.V.H."/>
            <person name="Justesen A.F."/>
            <person name="Oestergaard L."/>
            <person name="Abelskov A.K."/>
            <person name="Jensen R.B."/>
            <person name="Hansen L.N."/>
            <person name="Rasmussen S.K."/>
        </authorList>
    </citation>
    <scope>NUCLEOTIDE SEQUENCE [MRNA] OF 53-328</scope>
    <source>
        <strain>cv. Columbia</strain>
    </source>
</reference>
<reference key="5">
    <citation type="journal article" date="2002" name="Gene">
        <title>Analysis and expression of the class III peroxidase large gene family in Arabidopsis thaliana.</title>
        <authorList>
            <person name="Tognolli M."/>
            <person name="Penel C."/>
            <person name="Greppin H."/>
            <person name="Simon P."/>
        </authorList>
    </citation>
    <scope>GENE FAMILY ORGANIZATION</scope>
    <scope>NOMENCLATURE</scope>
    <source>
        <strain>cv. Columbia</strain>
    </source>
</reference>
<protein>
    <recommendedName>
        <fullName>Peroxidase 63</fullName>
        <shortName>Atperox P63</shortName>
        <ecNumber>1.11.1.7</ecNumber>
    </recommendedName>
    <alternativeName>
        <fullName>ATP26a</fullName>
    </alternativeName>
</protein>
<proteinExistence type="evidence at transcript level"/>
<keyword id="KW-0106">Calcium</keyword>
<keyword id="KW-1015">Disulfide bond</keyword>
<keyword id="KW-0325">Glycoprotein</keyword>
<keyword id="KW-0349">Heme</keyword>
<keyword id="KW-0376">Hydrogen peroxide</keyword>
<keyword id="KW-0408">Iron</keyword>
<keyword id="KW-0479">Metal-binding</keyword>
<keyword id="KW-0560">Oxidoreductase</keyword>
<keyword id="KW-0575">Peroxidase</keyword>
<keyword id="KW-1185">Reference proteome</keyword>
<keyword id="KW-0964">Secreted</keyword>
<keyword id="KW-0732">Signal</keyword>
<gene>
    <name type="primary">PER63</name>
    <name type="synonym">P63</name>
    <name type="ordered locus">At5g40150</name>
    <name type="ORF">MSN9.5</name>
    <name type="ORF">MSN9.50</name>
</gene>
<comment type="function">
    <text>Removal of H(2)O(2), oxidation of toxic reductants, biosynthesis and degradation of lignin, suberization, auxin catabolism, response to environmental stresses such as wounding, pathogen attack and oxidative stress. These functions might be dependent on each isozyme/isoform in each plant tissue.</text>
</comment>
<comment type="catalytic activity">
    <reaction>
        <text>2 a phenolic donor + H2O2 = 2 a phenolic radical donor + 2 H2O</text>
        <dbReference type="Rhea" id="RHEA:56136"/>
        <dbReference type="ChEBI" id="CHEBI:15377"/>
        <dbReference type="ChEBI" id="CHEBI:16240"/>
        <dbReference type="ChEBI" id="CHEBI:139520"/>
        <dbReference type="ChEBI" id="CHEBI:139521"/>
        <dbReference type="EC" id="1.11.1.7"/>
    </reaction>
</comment>
<comment type="cofactor">
    <cofactor evidence="2">
        <name>heme b</name>
        <dbReference type="ChEBI" id="CHEBI:60344"/>
    </cofactor>
    <text evidence="2">Binds 1 heme b (iron(II)-protoporphyrin IX) group per subunit.</text>
</comment>
<comment type="cofactor">
    <cofactor evidence="2">
        <name>Ca(2+)</name>
        <dbReference type="ChEBI" id="CHEBI:29108"/>
    </cofactor>
    <text evidence="2">Binds 2 calcium ions per subunit.</text>
</comment>
<comment type="subcellular location">
    <subcellularLocation>
        <location evidence="2">Secreted</location>
    </subcellularLocation>
</comment>
<comment type="miscellaneous">
    <text>There are 73 peroxidase genes in A.thaliana.</text>
</comment>
<comment type="similarity">
    <text evidence="2">Belongs to the peroxidase family. Classical plant (class III) peroxidase subfamily.</text>
</comment>